<keyword id="KW-0028">Amino-acid biosynthesis</keyword>
<keyword id="KW-0055">Arginine biosynthesis</keyword>
<keyword id="KW-0963">Cytoplasm</keyword>
<keyword id="KW-0456">Lyase</keyword>
<keyword id="KW-1185">Reference proteome</keyword>
<name>ARLY_BURMA</name>
<organism>
    <name type="scientific">Burkholderia mallei (strain ATCC 23344)</name>
    <dbReference type="NCBI Taxonomy" id="243160"/>
    <lineage>
        <taxon>Bacteria</taxon>
        <taxon>Pseudomonadati</taxon>
        <taxon>Pseudomonadota</taxon>
        <taxon>Betaproteobacteria</taxon>
        <taxon>Burkholderiales</taxon>
        <taxon>Burkholderiaceae</taxon>
        <taxon>Burkholderia</taxon>
        <taxon>pseudomallei group</taxon>
    </lineage>
</organism>
<reference key="1">
    <citation type="journal article" date="2004" name="Proc. Natl. Acad. Sci. U.S.A.">
        <title>Structural flexibility in the Burkholderia mallei genome.</title>
        <authorList>
            <person name="Nierman W.C."/>
            <person name="DeShazer D."/>
            <person name="Kim H.S."/>
            <person name="Tettelin H."/>
            <person name="Nelson K.E."/>
            <person name="Feldblyum T.V."/>
            <person name="Ulrich R.L."/>
            <person name="Ronning C.M."/>
            <person name="Brinkac L.M."/>
            <person name="Daugherty S.C."/>
            <person name="Davidsen T.D."/>
            <person name="DeBoy R.T."/>
            <person name="Dimitrov G."/>
            <person name="Dodson R.J."/>
            <person name="Durkin A.S."/>
            <person name="Gwinn M.L."/>
            <person name="Haft D.H."/>
            <person name="Khouri H.M."/>
            <person name="Kolonay J.F."/>
            <person name="Madupu R."/>
            <person name="Mohammoud Y."/>
            <person name="Nelson W.C."/>
            <person name="Radune D."/>
            <person name="Romero C.M."/>
            <person name="Sarria S."/>
            <person name="Selengut J."/>
            <person name="Shamblin C."/>
            <person name="Sullivan S.A."/>
            <person name="White O."/>
            <person name="Yu Y."/>
            <person name="Zafar N."/>
            <person name="Zhou L."/>
            <person name="Fraser C.M."/>
        </authorList>
    </citation>
    <scope>NUCLEOTIDE SEQUENCE [LARGE SCALE GENOMIC DNA]</scope>
    <source>
        <strain>ATCC 23344</strain>
    </source>
</reference>
<sequence length="469" mass="51173">MTSQLHKKGEAWSARFSEPMSELVKRYTSSVFFDKRLALVDIAGSLAHAGMLAAQKIISADDLAAIERGMAQIKGEIERGEFEWQLDLEDVHLNIEARLTALIGDAGKRLHTGRSRNDQVATDIRLWLRGEIDRIGGLLNDLRGALIDLAEQNADTILPGFTHLQVAQPVTFGHHLLAYVEMFSRDAERMRDCRARVNRLPLGAAALAGTSYPIDRHAVAKTLGFDGICANSLDAVSDRDFAIEFTAAAALVMTHVSRFSEELVLWMSPRVGFIDIADRFCTGSSIMPQKKNPDVPELARGKTGRVNGHLMALLTLMKGQPLAYNKDNQEDKEPLFDTVDTVADTLRIFAEMVAGITVKPDAMRAAALQGFSTATDLADYLVKRGLPFRDAHEAVAHAVKVCDARGIDLADLTLDEMKQELPNVAHLIGEDVFDYLTLEGSVASRNHPGGTAPDQVRAAAKAARAALGQ</sequence>
<feature type="chain" id="PRO_0000137751" description="Argininosuccinate lyase">
    <location>
        <begin position="1"/>
        <end position="469"/>
    </location>
</feature>
<accession>Q62LD1</accession>
<proteinExistence type="inferred from homology"/>
<protein>
    <recommendedName>
        <fullName evidence="1">Argininosuccinate lyase</fullName>
        <shortName evidence="1">ASAL</shortName>
        <ecNumber evidence="1">4.3.2.1</ecNumber>
    </recommendedName>
    <alternativeName>
        <fullName evidence="1">Arginosuccinase</fullName>
    </alternativeName>
</protein>
<comment type="catalytic activity">
    <reaction evidence="1">
        <text>2-(N(omega)-L-arginino)succinate = fumarate + L-arginine</text>
        <dbReference type="Rhea" id="RHEA:24020"/>
        <dbReference type="ChEBI" id="CHEBI:29806"/>
        <dbReference type="ChEBI" id="CHEBI:32682"/>
        <dbReference type="ChEBI" id="CHEBI:57472"/>
        <dbReference type="EC" id="4.3.2.1"/>
    </reaction>
</comment>
<comment type="pathway">
    <text evidence="1">Amino-acid biosynthesis; L-arginine biosynthesis; L-arginine from L-ornithine and carbamoyl phosphate: step 3/3.</text>
</comment>
<comment type="subcellular location">
    <subcellularLocation>
        <location evidence="1">Cytoplasm</location>
    </subcellularLocation>
</comment>
<comment type="similarity">
    <text evidence="1">Belongs to the lyase 1 family. Argininosuccinate lyase subfamily.</text>
</comment>
<evidence type="ECO:0000255" key="1">
    <source>
        <dbReference type="HAMAP-Rule" id="MF_00006"/>
    </source>
</evidence>
<gene>
    <name evidence="1" type="primary">argH</name>
    <name type="ordered locus">BMA0718</name>
</gene>
<dbReference type="EC" id="4.3.2.1" evidence="1"/>
<dbReference type="EMBL" id="CP000010">
    <property type="protein sequence ID" value="AAU49214.1"/>
    <property type="molecule type" value="Genomic_DNA"/>
</dbReference>
<dbReference type="RefSeq" id="WP_004191886.1">
    <property type="nucleotide sequence ID" value="NC_006348.1"/>
</dbReference>
<dbReference type="RefSeq" id="YP_102488.1">
    <property type="nucleotide sequence ID" value="NC_006348.1"/>
</dbReference>
<dbReference type="SMR" id="Q62LD1"/>
<dbReference type="GeneID" id="93059506"/>
<dbReference type="KEGG" id="bma:BMA0718"/>
<dbReference type="PATRIC" id="fig|243160.12.peg.737"/>
<dbReference type="eggNOG" id="COG0165">
    <property type="taxonomic scope" value="Bacteria"/>
</dbReference>
<dbReference type="HOGENOM" id="CLU_027272_2_3_4"/>
<dbReference type="UniPathway" id="UPA00068">
    <property type="reaction ID" value="UER00114"/>
</dbReference>
<dbReference type="Proteomes" id="UP000006693">
    <property type="component" value="Chromosome 1"/>
</dbReference>
<dbReference type="GO" id="GO:0005829">
    <property type="term" value="C:cytosol"/>
    <property type="evidence" value="ECO:0007669"/>
    <property type="project" value="TreeGrafter"/>
</dbReference>
<dbReference type="GO" id="GO:0004056">
    <property type="term" value="F:argininosuccinate lyase activity"/>
    <property type="evidence" value="ECO:0007669"/>
    <property type="project" value="UniProtKB-UniRule"/>
</dbReference>
<dbReference type="GO" id="GO:0042450">
    <property type="term" value="P:arginine biosynthetic process via ornithine"/>
    <property type="evidence" value="ECO:0007669"/>
    <property type="project" value="InterPro"/>
</dbReference>
<dbReference type="GO" id="GO:0006526">
    <property type="term" value="P:L-arginine biosynthetic process"/>
    <property type="evidence" value="ECO:0007669"/>
    <property type="project" value="UniProtKB-UniRule"/>
</dbReference>
<dbReference type="CDD" id="cd01359">
    <property type="entry name" value="Argininosuccinate_lyase"/>
    <property type="match status" value="1"/>
</dbReference>
<dbReference type="FunFam" id="1.10.275.10:FF:000002">
    <property type="entry name" value="Argininosuccinate lyase"/>
    <property type="match status" value="1"/>
</dbReference>
<dbReference type="FunFam" id="1.10.40.30:FF:000001">
    <property type="entry name" value="Argininosuccinate lyase"/>
    <property type="match status" value="1"/>
</dbReference>
<dbReference type="FunFam" id="1.20.200.10:FF:000015">
    <property type="entry name" value="argininosuccinate lyase isoform X2"/>
    <property type="match status" value="1"/>
</dbReference>
<dbReference type="Gene3D" id="1.10.40.30">
    <property type="entry name" value="Fumarase/aspartase (C-terminal domain)"/>
    <property type="match status" value="1"/>
</dbReference>
<dbReference type="Gene3D" id="1.20.200.10">
    <property type="entry name" value="Fumarase/aspartase (Central domain)"/>
    <property type="match status" value="1"/>
</dbReference>
<dbReference type="Gene3D" id="1.10.275.10">
    <property type="entry name" value="Fumarase/aspartase (N-terminal domain)"/>
    <property type="match status" value="1"/>
</dbReference>
<dbReference type="HAMAP" id="MF_00006">
    <property type="entry name" value="Arg_succ_lyase"/>
    <property type="match status" value="1"/>
</dbReference>
<dbReference type="InterPro" id="IPR029419">
    <property type="entry name" value="Arg_succ_lyase_C"/>
</dbReference>
<dbReference type="InterPro" id="IPR009049">
    <property type="entry name" value="Argininosuccinate_lyase"/>
</dbReference>
<dbReference type="InterPro" id="IPR024083">
    <property type="entry name" value="Fumarase/histidase_N"/>
</dbReference>
<dbReference type="InterPro" id="IPR020557">
    <property type="entry name" value="Fumarate_lyase_CS"/>
</dbReference>
<dbReference type="InterPro" id="IPR000362">
    <property type="entry name" value="Fumarate_lyase_fam"/>
</dbReference>
<dbReference type="InterPro" id="IPR022761">
    <property type="entry name" value="Fumarate_lyase_N"/>
</dbReference>
<dbReference type="InterPro" id="IPR008948">
    <property type="entry name" value="L-Aspartase-like"/>
</dbReference>
<dbReference type="NCBIfam" id="TIGR00838">
    <property type="entry name" value="argH"/>
    <property type="match status" value="1"/>
</dbReference>
<dbReference type="PANTHER" id="PTHR43814">
    <property type="entry name" value="ARGININOSUCCINATE LYASE"/>
    <property type="match status" value="1"/>
</dbReference>
<dbReference type="PANTHER" id="PTHR43814:SF1">
    <property type="entry name" value="ARGININOSUCCINATE LYASE"/>
    <property type="match status" value="1"/>
</dbReference>
<dbReference type="Pfam" id="PF14698">
    <property type="entry name" value="ASL_C2"/>
    <property type="match status" value="1"/>
</dbReference>
<dbReference type="Pfam" id="PF00206">
    <property type="entry name" value="Lyase_1"/>
    <property type="match status" value="1"/>
</dbReference>
<dbReference type="PRINTS" id="PR00145">
    <property type="entry name" value="ARGSUCLYASE"/>
</dbReference>
<dbReference type="PRINTS" id="PR00149">
    <property type="entry name" value="FUMRATELYASE"/>
</dbReference>
<dbReference type="SUPFAM" id="SSF48557">
    <property type="entry name" value="L-aspartase-like"/>
    <property type="match status" value="1"/>
</dbReference>
<dbReference type="PROSITE" id="PS00163">
    <property type="entry name" value="FUMARATE_LYASES"/>
    <property type="match status" value="1"/>
</dbReference>